<reference key="1">
    <citation type="journal article" date="2005" name="PLoS Biol.">
        <title>Major structural differences and novel potential virulence mechanisms from the genomes of multiple Campylobacter species.</title>
        <authorList>
            <person name="Fouts D.E."/>
            <person name="Mongodin E.F."/>
            <person name="Mandrell R.E."/>
            <person name="Miller W.G."/>
            <person name="Rasko D.A."/>
            <person name="Ravel J."/>
            <person name="Brinkac L.M."/>
            <person name="DeBoy R.T."/>
            <person name="Parker C.T."/>
            <person name="Daugherty S.C."/>
            <person name="Dodson R.J."/>
            <person name="Durkin A.S."/>
            <person name="Madupu R."/>
            <person name="Sullivan S.A."/>
            <person name="Shetty J.U."/>
            <person name="Ayodeji M.A."/>
            <person name="Shvartsbeyn A."/>
            <person name="Schatz M.C."/>
            <person name="Badger J.H."/>
            <person name="Fraser C.M."/>
            <person name="Nelson K.E."/>
        </authorList>
    </citation>
    <scope>NUCLEOTIDE SEQUENCE [LARGE SCALE GENOMIC DNA]</scope>
    <source>
        <strain>RM1221</strain>
    </source>
</reference>
<comment type="catalytic activity">
    <reaction evidence="1">
        <text>(6R)-10-formyltetrahydrofolate + 5-amino-1-(5-phospho-beta-D-ribosyl)imidazole-4-carboxamide = 5-formamido-1-(5-phospho-D-ribosyl)imidazole-4-carboxamide + (6S)-5,6,7,8-tetrahydrofolate</text>
        <dbReference type="Rhea" id="RHEA:22192"/>
        <dbReference type="ChEBI" id="CHEBI:57453"/>
        <dbReference type="ChEBI" id="CHEBI:58467"/>
        <dbReference type="ChEBI" id="CHEBI:58475"/>
        <dbReference type="ChEBI" id="CHEBI:195366"/>
        <dbReference type="EC" id="2.1.2.3"/>
    </reaction>
</comment>
<comment type="catalytic activity">
    <reaction evidence="1">
        <text>IMP + H2O = 5-formamido-1-(5-phospho-D-ribosyl)imidazole-4-carboxamide</text>
        <dbReference type="Rhea" id="RHEA:18445"/>
        <dbReference type="ChEBI" id="CHEBI:15377"/>
        <dbReference type="ChEBI" id="CHEBI:58053"/>
        <dbReference type="ChEBI" id="CHEBI:58467"/>
        <dbReference type="EC" id="3.5.4.10"/>
    </reaction>
</comment>
<comment type="pathway">
    <text evidence="1">Purine metabolism; IMP biosynthesis via de novo pathway; 5-formamido-1-(5-phospho-D-ribosyl)imidazole-4-carboxamide from 5-amino-1-(5-phospho-D-ribosyl)imidazole-4-carboxamide (10-formyl THF route): step 1/1.</text>
</comment>
<comment type="pathway">
    <text evidence="1">Purine metabolism; IMP biosynthesis via de novo pathway; IMP from 5-formamido-1-(5-phospho-D-ribosyl)imidazole-4-carboxamide: step 1/1.</text>
</comment>
<comment type="domain">
    <text evidence="1">The IMP cyclohydrolase activity resides in the N-terminal region.</text>
</comment>
<comment type="similarity">
    <text evidence="1">Belongs to the PurH family.</text>
</comment>
<protein>
    <recommendedName>
        <fullName evidence="1">Bifunctional purine biosynthesis protein PurH</fullName>
    </recommendedName>
    <domain>
        <recommendedName>
            <fullName evidence="1">Phosphoribosylaminoimidazolecarboxamide formyltransferase</fullName>
            <ecNumber evidence="1">2.1.2.3</ecNumber>
        </recommendedName>
        <alternativeName>
            <fullName evidence="1">AICAR transformylase</fullName>
        </alternativeName>
    </domain>
    <domain>
        <recommendedName>
            <fullName evidence="1">IMP cyclohydrolase</fullName>
            <ecNumber evidence="1">3.5.4.10</ecNumber>
        </recommendedName>
        <alternativeName>
            <fullName evidence="1">ATIC</fullName>
        </alternativeName>
        <alternativeName>
            <fullName evidence="1">IMP synthase</fullName>
        </alternativeName>
        <alternativeName>
            <fullName evidence="1">Inosinicase</fullName>
        </alternativeName>
    </domain>
</protein>
<organism>
    <name type="scientific">Campylobacter jejuni (strain RM1221)</name>
    <dbReference type="NCBI Taxonomy" id="195099"/>
    <lineage>
        <taxon>Bacteria</taxon>
        <taxon>Pseudomonadati</taxon>
        <taxon>Campylobacterota</taxon>
        <taxon>Epsilonproteobacteria</taxon>
        <taxon>Campylobacterales</taxon>
        <taxon>Campylobacteraceae</taxon>
        <taxon>Campylobacter</taxon>
    </lineage>
</organism>
<dbReference type="EC" id="2.1.2.3" evidence="1"/>
<dbReference type="EC" id="3.5.4.10" evidence="1"/>
<dbReference type="EMBL" id="CP000025">
    <property type="protein sequence ID" value="AAW35364.1"/>
    <property type="molecule type" value="Genomic_DNA"/>
</dbReference>
<dbReference type="RefSeq" id="WP_002900032.1">
    <property type="nucleotide sequence ID" value="NC_003912.7"/>
</dbReference>
<dbReference type="SMR" id="Q5HUK6"/>
<dbReference type="KEGG" id="cjr:CJE1033"/>
<dbReference type="HOGENOM" id="CLU_016316_5_2_7"/>
<dbReference type="UniPathway" id="UPA00074">
    <property type="reaction ID" value="UER00133"/>
</dbReference>
<dbReference type="UniPathway" id="UPA00074">
    <property type="reaction ID" value="UER00135"/>
</dbReference>
<dbReference type="GO" id="GO:0005829">
    <property type="term" value="C:cytosol"/>
    <property type="evidence" value="ECO:0007669"/>
    <property type="project" value="TreeGrafter"/>
</dbReference>
<dbReference type="GO" id="GO:0003937">
    <property type="term" value="F:IMP cyclohydrolase activity"/>
    <property type="evidence" value="ECO:0007669"/>
    <property type="project" value="UniProtKB-UniRule"/>
</dbReference>
<dbReference type="GO" id="GO:0004643">
    <property type="term" value="F:phosphoribosylaminoimidazolecarboxamide formyltransferase activity"/>
    <property type="evidence" value="ECO:0007669"/>
    <property type="project" value="UniProtKB-UniRule"/>
</dbReference>
<dbReference type="GO" id="GO:0006189">
    <property type="term" value="P:'de novo' IMP biosynthetic process"/>
    <property type="evidence" value="ECO:0007669"/>
    <property type="project" value="UniProtKB-UniRule"/>
</dbReference>
<dbReference type="CDD" id="cd01421">
    <property type="entry name" value="IMPCH"/>
    <property type="match status" value="1"/>
</dbReference>
<dbReference type="FunFam" id="3.40.140.20:FF:000001">
    <property type="entry name" value="Bifunctional purine biosynthesis protein PurH"/>
    <property type="match status" value="1"/>
</dbReference>
<dbReference type="FunFam" id="3.40.50.1380:FF:000001">
    <property type="entry name" value="Bifunctional purine biosynthesis protein PurH"/>
    <property type="match status" value="1"/>
</dbReference>
<dbReference type="Gene3D" id="3.40.140.20">
    <property type="match status" value="2"/>
</dbReference>
<dbReference type="Gene3D" id="3.40.50.1380">
    <property type="entry name" value="Methylglyoxal synthase-like domain"/>
    <property type="match status" value="1"/>
</dbReference>
<dbReference type="HAMAP" id="MF_00139">
    <property type="entry name" value="PurH"/>
    <property type="match status" value="1"/>
</dbReference>
<dbReference type="InterPro" id="IPR024051">
    <property type="entry name" value="AICAR_Tfase_dup_dom_sf"/>
</dbReference>
<dbReference type="InterPro" id="IPR016193">
    <property type="entry name" value="Cytidine_deaminase-like"/>
</dbReference>
<dbReference type="InterPro" id="IPR011607">
    <property type="entry name" value="MGS-like_dom"/>
</dbReference>
<dbReference type="InterPro" id="IPR036914">
    <property type="entry name" value="MGS-like_dom_sf"/>
</dbReference>
<dbReference type="InterPro" id="IPR002695">
    <property type="entry name" value="PurH-like"/>
</dbReference>
<dbReference type="NCBIfam" id="NF002049">
    <property type="entry name" value="PRK00881.1"/>
    <property type="match status" value="1"/>
</dbReference>
<dbReference type="NCBIfam" id="TIGR00355">
    <property type="entry name" value="purH"/>
    <property type="match status" value="1"/>
</dbReference>
<dbReference type="PANTHER" id="PTHR11692:SF0">
    <property type="entry name" value="BIFUNCTIONAL PURINE BIOSYNTHESIS PROTEIN ATIC"/>
    <property type="match status" value="1"/>
</dbReference>
<dbReference type="PANTHER" id="PTHR11692">
    <property type="entry name" value="BIFUNCTIONAL PURINE BIOSYNTHESIS PROTEIN PURH"/>
    <property type="match status" value="1"/>
</dbReference>
<dbReference type="Pfam" id="PF01808">
    <property type="entry name" value="AICARFT_IMPCHas"/>
    <property type="match status" value="1"/>
</dbReference>
<dbReference type="Pfam" id="PF02142">
    <property type="entry name" value="MGS"/>
    <property type="match status" value="1"/>
</dbReference>
<dbReference type="PIRSF" id="PIRSF000414">
    <property type="entry name" value="AICARFT_IMPCHas"/>
    <property type="match status" value="1"/>
</dbReference>
<dbReference type="SMART" id="SM00798">
    <property type="entry name" value="AICARFT_IMPCHas"/>
    <property type="match status" value="1"/>
</dbReference>
<dbReference type="SMART" id="SM00851">
    <property type="entry name" value="MGS"/>
    <property type="match status" value="1"/>
</dbReference>
<dbReference type="SUPFAM" id="SSF53927">
    <property type="entry name" value="Cytidine deaminase-like"/>
    <property type="match status" value="1"/>
</dbReference>
<dbReference type="SUPFAM" id="SSF52335">
    <property type="entry name" value="Methylglyoxal synthase-like"/>
    <property type="match status" value="1"/>
</dbReference>
<dbReference type="PROSITE" id="PS51855">
    <property type="entry name" value="MGS"/>
    <property type="match status" value="1"/>
</dbReference>
<gene>
    <name evidence="1" type="primary">purH</name>
    <name type="ordered locus">CJE1033</name>
</gene>
<keyword id="KW-0378">Hydrolase</keyword>
<keyword id="KW-0511">Multifunctional enzyme</keyword>
<keyword id="KW-0658">Purine biosynthesis</keyword>
<keyword id="KW-0808">Transferase</keyword>
<evidence type="ECO:0000255" key="1">
    <source>
        <dbReference type="HAMAP-Rule" id="MF_00139"/>
    </source>
</evidence>
<evidence type="ECO:0000255" key="2">
    <source>
        <dbReference type="PROSITE-ProRule" id="PRU01202"/>
    </source>
</evidence>
<proteinExistence type="inferred from homology"/>
<name>PUR9_CAMJR</name>
<sequence>MRALLSVSDKEGIVEFGKELENLGFEILSTGGTFKFLKENGIKVMEVSDFTKSPELFEGRVKTLHPKIHGGILHKRSNENHIKQAKENEILGIDLVCVNLYPFKKTTIMSDDFDEIIENIDIGGPAMIRSAAKNYKDVMVLCDPLDYEKVIETLKKGQIDENFRLNLMIKAYEHTANYDAYIANYMNERFNGGFGASKFIVGQKVFDTKYGENPHQKGALYEFDAFFSANFKALKGEASFNNLTDINAALNLASSFDKAPAIAIVKHGNPCGFAIKENLVQSYIHALKCDSVSAYGGVVAINGTLDEALANKINEIYVEVIIAANVDEKALAVFEGKKRIKIFTQESSFLIRSFDKYDFKHIDGGFVYQNSDEVGEDEFKNAKLMSQREASKEELKDLEIAMKIAAFTKSNNVVYVKNGAMVAIGMGMTSRIDAAKVAIAKAKEMGLDLQGCVLASEAFFPFRDSIDEASKVGVKAIVEPGGSIRDDEVVKAADEYGMALYFTGVRHFLH</sequence>
<accession>Q5HUK6</accession>
<feature type="chain" id="PRO_0000192080" description="Bifunctional purine biosynthesis protein PurH">
    <location>
        <begin position="1"/>
        <end position="510"/>
    </location>
</feature>
<feature type="domain" description="MGS-like" evidence="2">
    <location>
        <begin position="1"/>
        <end position="142"/>
    </location>
</feature>